<accession>Q7Z8P9</accession>
<accession>Q4WEM0</accession>
<dbReference type="EC" id="2.7.4.6"/>
<dbReference type="EMBL" id="AY324230">
    <property type="protein sequence ID" value="AAP85295.1"/>
    <property type="molecule type" value="Genomic_DNA"/>
</dbReference>
<dbReference type="EMBL" id="AAHF01000011">
    <property type="protein sequence ID" value="EAL85957.1"/>
    <property type="molecule type" value="Genomic_DNA"/>
</dbReference>
<dbReference type="RefSeq" id="XP_747995.1">
    <property type="nucleotide sequence ID" value="XM_742902.1"/>
</dbReference>
<dbReference type="PDB" id="6AGY">
    <property type="method" value="X-ray"/>
    <property type="resolution" value="1.80 A"/>
    <property type="chains" value="A=1-153"/>
</dbReference>
<dbReference type="PDB" id="6XP4">
    <property type="method" value="X-ray"/>
    <property type="resolution" value="2.00 A"/>
    <property type="chains" value="A/B/C/D/E/F=1-153"/>
</dbReference>
<dbReference type="PDB" id="6XP7">
    <property type="method" value="X-ray"/>
    <property type="resolution" value="2.20 A"/>
    <property type="chains" value="A/B/C=1-153"/>
</dbReference>
<dbReference type="PDB" id="6XPS">
    <property type="method" value="X-ray"/>
    <property type="resolution" value="1.64 A"/>
    <property type="chains" value="A/B/C=1-153"/>
</dbReference>
<dbReference type="PDB" id="6XPT">
    <property type="method" value="X-ray"/>
    <property type="resolution" value="2.30 A"/>
    <property type="chains" value="A/B/C/E/G/H=1-153"/>
</dbReference>
<dbReference type="PDB" id="6XPU">
    <property type="method" value="X-ray"/>
    <property type="resolution" value="1.90 A"/>
    <property type="chains" value="A/B/C=1-153"/>
</dbReference>
<dbReference type="PDB" id="6XPV">
    <property type="method" value="X-ray"/>
    <property type="resolution" value="2.30 A"/>
    <property type="chains" value="A/B/C/E/G/H=1-153"/>
</dbReference>
<dbReference type="PDB" id="6XPW">
    <property type="method" value="X-ray"/>
    <property type="resolution" value="1.90 A"/>
    <property type="chains" value="A/B/C/E/G/H=1-153"/>
</dbReference>
<dbReference type="PDBsum" id="6AGY"/>
<dbReference type="PDBsum" id="6XP4"/>
<dbReference type="PDBsum" id="6XP7"/>
<dbReference type="PDBsum" id="6XPS"/>
<dbReference type="PDBsum" id="6XPT"/>
<dbReference type="PDBsum" id="6XPU"/>
<dbReference type="PDBsum" id="6XPV"/>
<dbReference type="PDBsum" id="6XPW"/>
<dbReference type="SMR" id="Q7Z8P9"/>
<dbReference type="FunCoup" id="Q7Z8P9">
    <property type="interactions" value="867"/>
</dbReference>
<dbReference type="STRING" id="330879.Q7Z8P9"/>
<dbReference type="SwissPalm" id="Q7Z8P9"/>
<dbReference type="EnsemblFungi" id="EAL85957">
    <property type="protein sequence ID" value="EAL85957"/>
    <property type="gene ID" value="AFUA_5G03490"/>
</dbReference>
<dbReference type="GeneID" id="3505356"/>
<dbReference type="KEGG" id="afm:AFUA_5G03490"/>
<dbReference type="VEuPathDB" id="FungiDB:Afu5g03490"/>
<dbReference type="eggNOG" id="KOG0888">
    <property type="taxonomic scope" value="Eukaryota"/>
</dbReference>
<dbReference type="HOGENOM" id="CLU_060216_6_3_1"/>
<dbReference type="InParanoid" id="Q7Z8P9"/>
<dbReference type="OMA" id="QHYGEHK"/>
<dbReference type="OrthoDB" id="2162449at2759"/>
<dbReference type="BRENDA" id="2.7.4.6">
    <property type="organism ID" value="508"/>
</dbReference>
<dbReference type="Proteomes" id="UP000002530">
    <property type="component" value="Chromosome 5"/>
</dbReference>
<dbReference type="GO" id="GO:0005524">
    <property type="term" value="F:ATP binding"/>
    <property type="evidence" value="ECO:0007669"/>
    <property type="project" value="UniProtKB-KW"/>
</dbReference>
<dbReference type="GO" id="GO:0046872">
    <property type="term" value="F:metal ion binding"/>
    <property type="evidence" value="ECO:0007669"/>
    <property type="project" value="UniProtKB-KW"/>
</dbReference>
<dbReference type="GO" id="GO:0004550">
    <property type="term" value="F:nucleoside diphosphate kinase activity"/>
    <property type="evidence" value="ECO:0007669"/>
    <property type="project" value="UniProtKB-EC"/>
</dbReference>
<dbReference type="GO" id="GO:0006241">
    <property type="term" value="P:CTP biosynthetic process"/>
    <property type="evidence" value="ECO:0007669"/>
    <property type="project" value="InterPro"/>
</dbReference>
<dbReference type="GO" id="GO:0006183">
    <property type="term" value="P:GTP biosynthetic process"/>
    <property type="evidence" value="ECO:0007669"/>
    <property type="project" value="InterPro"/>
</dbReference>
<dbReference type="GO" id="GO:0006228">
    <property type="term" value="P:UTP biosynthetic process"/>
    <property type="evidence" value="ECO:0007669"/>
    <property type="project" value="InterPro"/>
</dbReference>
<dbReference type="CDD" id="cd04413">
    <property type="entry name" value="NDPk_I"/>
    <property type="match status" value="1"/>
</dbReference>
<dbReference type="FunFam" id="3.30.70.141:FF:000002">
    <property type="entry name" value="Nucleoside diphosphate kinase"/>
    <property type="match status" value="1"/>
</dbReference>
<dbReference type="Gene3D" id="3.30.70.141">
    <property type="entry name" value="Nucleoside diphosphate kinase-like domain"/>
    <property type="match status" value="1"/>
</dbReference>
<dbReference type="HAMAP" id="MF_00451">
    <property type="entry name" value="NDP_kinase"/>
    <property type="match status" value="1"/>
</dbReference>
<dbReference type="InterPro" id="IPR034907">
    <property type="entry name" value="NDK-like_dom"/>
</dbReference>
<dbReference type="InterPro" id="IPR036850">
    <property type="entry name" value="NDK-like_dom_sf"/>
</dbReference>
<dbReference type="InterPro" id="IPR001564">
    <property type="entry name" value="Nucleoside_diP_kinase"/>
</dbReference>
<dbReference type="InterPro" id="IPR023005">
    <property type="entry name" value="Nucleoside_diP_kinase_AS"/>
</dbReference>
<dbReference type="NCBIfam" id="NF001908">
    <property type="entry name" value="PRK00668.1"/>
    <property type="match status" value="1"/>
</dbReference>
<dbReference type="PANTHER" id="PTHR11349">
    <property type="entry name" value="NUCLEOSIDE DIPHOSPHATE KINASE"/>
    <property type="match status" value="1"/>
</dbReference>
<dbReference type="Pfam" id="PF00334">
    <property type="entry name" value="NDK"/>
    <property type="match status" value="1"/>
</dbReference>
<dbReference type="PRINTS" id="PR01243">
    <property type="entry name" value="NUCDPKINASE"/>
</dbReference>
<dbReference type="SMART" id="SM00562">
    <property type="entry name" value="NDK"/>
    <property type="match status" value="1"/>
</dbReference>
<dbReference type="SUPFAM" id="SSF54919">
    <property type="entry name" value="Nucleoside diphosphate kinase, NDK"/>
    <property type="match status" value="1"/>
</dbReference>
<dbReference type="PROSITE" id="PS00469">
    <property type="entry name" value="NDPK"/>
    <property type="match status" value="1"/>
</dbReference>
<dbReference type="PROSITE" id="PS51374">
    <property type="entry name" value="NDPK_LIKE"/>
    <property type="match status" value="1"/>
</dbReference>
<sequence length="153" mass="16932">MSNEQTFIAIKPDGVQRGLIGPIISRFENRGFKLVAMKLVSPPQSQLEQHYADLSDKPFFKGLVSYMLSGPICAMVWEGRDVVKTGRTILGATNPLASAPGTIRGDFAIDVGRNVCHGSDSVENAKKEIALWFKPEELISWKSATFDWVYEKA</sequence>
<name>NDK_ASPFU</name>
<protein>
    <recommendedName>
        <fullName>Nucleoside diphosphate kinase</fullName>
        <shortName>NDK</shortName>
        <shortName>NDP kinase</shortName>
        <ecNumber>2.7.4.6</ecNumber>
    </recommendedName>
</protein>
<feature type="chain" id="PRO_0000137148" description="Nucleoside diphosphate kinase">
    <location>
        <begin position="1"/>
        <end position="153"/>
    </location>
</feature>
<feature type="active site" description="Pros-phosphohistidine intermediate" evidence="1">
    <location>
        <position position="117"/>
    </location>
</feature>
<feature type="binding site" evidence="1">
    <location>
        <position position="11"/>
    </location>
    <ligand>
        <name>ATP</name>
        <dbReference type="ChEBI" id="CHEBI:30616"/>
    </ligand>
</feature>
<feature type="binding site" evidence="1">
    <location>
        <position position="59"/>
    </location>
    <ligand>
        <name>ATP</name>
        <dbReference type="ChEBI" id="CHEBI:30616"/>
    </ligand>
</feature>
<feature type="binding site" evidence="1">
    <location>
        <position position="87"/>
    </location>
    <ligand>
        <name>ATP</name>
        <dbReference type="ChEBI" id="CHEBI:30616"/>
    </ligand>
</feature>
<feature type="binding site" evidence="1">
    <location>
        <position position="93"/>
    </location>
    <ligand>
        <name>ATP</name>
        <dbReference type="ChEBI" id="CHEBI:30616"/>
    </ligand>
</feature>
<feature type="binding site" evidence="1">
    <location>
        <position position="104"/>
    </location>
    <ligand>
        <name>ATP</name>
        <dbReference type="ChEBI" id="CHEBI:30616"/>
    </ligand>
</feature>
<feature type="binding site" evidence="1">
    <location>
        <position position="114"/>
    </location>
    <ligand>
        <name>ATP</name>
        <dbReference type="ChEBI" id="CHEBI:30616"/>
    </ligand>
</feature>
<feature type="strand" evidence="3">
    <location>
        <begin position="5"/>
        <end position="10"/>
    </location>
</feature>
<feature type="helix" evidence="3">
    <location>
        <begin position="12"/>
        <end position="16"/>
    </location>
</feature>
<feature type="helix" evidence="3">
    <location>
        <begin position="20"/>
        <end position="30"/>
    </location>
</feature>
<feature type="strand" evidence="3">
    <location>
        <begin position="33"/>
        <end position="40"/>
    </location>
</feature>
<feature type="helix" evidence="3">
    <location>
        <begin position="44"/>
        <end position="50"/>
    </location>
</feature>
<feature type="helix" evidence="3">
    <location>
        <begin position="52"/>
        <end position="54"/>
    </location>
</feature>
<feature type="helix" evidence="3">
    <location>
        <begin position="60"/>
        <end position="67"/>
    </location>
</feature>
<feature type="strand" evidence="3">
    <location>
        <begin position="72"/>
        <end position="79"/>
    </location>
</feature>
<feature type="helix" evidence="3">
    <location>
        <begin position="82"/>
        <end position="90"/>
    </location>
</feature>
<feature type="helix" evidence="3">
    <location>
        <begin position="95"/>
        <end position="97"/>
    </location>
</feature>
<feature type="helix" evidence="3">
    <location>
        <begin position="103"/>
        <end position="107"/>
    </location>
</feature>
<feature type="helix" evidence="3">
    <location>
        <begin position="111"/>
        <end position="113"/>
    </location>
</feature>
<feature type="strand" evidence="3">
    <location>
        <begin position="115"/>
        <end position="118"/>
    </location>
</feature>
<feature type="helix" evidence="3">
    <location>
        <begin position="122"/>
        <end position="132"/>
    </location>
</feature>
<feature type="helix" evidence="3">
    <location>
        <begin position="135"/>
        <end position="137"/>
    </location>
</feature>
<feature type="helix" evidence="3">
    <location>
        <begin position="146"/>
        <end position="149"/>
    </location>
</feature>
<comment type="function">
    <text>Major role in the synthesis of nucleoside triphosphates other than ATP. The ATP gamma phosphate is transferred to the NDP beta phosphate via a ping-pong mechanism, using a phosphorylated active-site intermediate.</text>
</comment>
<comment type="catalytic activity">
    <reaction>
        <text>a 2'-deoxyribonucleoside 5'-diphosphate + ATP = a 2'-deoxyribonucleoside 5'-triphosphate + ADP</text>
        <dbReference type="Rhea" id="RHEA:44640"/>
        <dbReference type="ChEBI" id="CHEBI:30616"/>
        <dbReference type="ChEBI" id="CHEBI:61560"/>
        <dbReference type="ChEBI" id="CHEBI:73316"/>
        <dbReference type="ChEBI" id="CHEBI:456216"/>
        <dbReference type="EC" id="2.7.4.6"/>
    </reaction>
</comment>
<comment type="catalytic activity">
    <reaction>
        <text>a ribonucleoside 5'-diphosphate + ATP = a ribonucleoside 5'-triphosphate + ADP</text>
        <dbReference type="Rhea" id="RHEA:18113"/>
        <dbReference type="ChEBI" id="CHEBI:30616"/>
        <dbReference type="ChEBI" id="CHEBI:57930"/>
        <dbReference type="ChEBI" id="CHEBI:61557"/>
        <dbReference type="ChEBI" id="CHEBI:456216"/>
        <dbReference type="EC" id="2.7.4.6"/>
    </reaction>
</comment>
<comment type="cofactor">
    <cofactor evidence="1">
        <name>Mg(2+)</name>
        <dbReference type="ChEBI" id="CHEBI:18420"/>
    </cofactor>
</comment>
<comment type="subunit">
    <text evidence="1">Homotrimer.</text>
</comment>
<comment type="similarity">
    <text evidence="2">Belongs to the NDK family.</text>
</comment>
<keyword id="KW-0002">3D-structure</keyword>
<keyword id="KW-0067">ATP-binding</keyword>
<keyword id="KW-0418">Kinase</keyword>
<keyword id="KW-0460">Magnesium</keyword>
<keyword id="KW-0479">Metal-binding</keyword>
<keyword id="KW-0546">Nucleotide metabolism</keyword>
<keyword id="KW-0547">Nucleotide-binding</keyword>
<keyword id="KW-0597">Phosphoprotein</keyword>
<keyword id="KW-1185">Reference proteome</keyword>
<keyword id="KW-0808">Transferase</keyword>
<reference key="1">
    <citation type="submission" date="2003-06" db="EMBL/GenBank/DDBJ databases">
        <title>Aspergillus fumigatus (NDK) is a putative nucleoside diphosphate kinase.</title>
        <authorList>
            <person name="Shankar J."/>
            <person name="Kamal N."/>
            <person name="Madan T."/>
            <person name="Basir S.F."/>
            <person name="Sarma P.U."/>
        </authorList>
    </citation>
    <scope>NUCLEOTIDE SEQUENCE [GENOMIC DNA]</scope>
</reference>
<reference key="2">
    <citation type="journal article" date="2005" name="Nature">
        <title>Genomic sequence of the pathogenic and allergenic filamentous fungus Aspergillus fumigatus.</title>
        <authorList>
            <person name="Nierman W.C."/>
            <person name="Pain A."/>
            <person name="Anderson M.J."/>
            <person name="Wortman J.R."/>
            <person name="Kim H.S."/>
            <person name="Arroyo J."/>
            <person name="Berriman M."/>
            <person name="Abe K."/>
            <person name="Archer D.B."/>
            <person name="Bermejo C."/>
            <person name="Bennett J.W."/>
            <person name="Bowyer P."/>
            <person name="Chen D."/>
            <person name="Collins M."/>
            <person name="Coulsen R."/>
            <person name="Davies R."/>
            <person name="Dyer P.S."/>
            <person name="Farman M.L."/>
            <person name="Fedorova N."/>
            <person name="Fedorova N.D."/>
            <person name="Feldblyum T.V."/>
            <person name="Fischer R."/>
            <person name="Fosker N."/>
            <person name="Fraser A."/>
            <person name="Garcia J.L."/>
            <person name="Garcia M.J."/>
            <person name="Goble A."/>
            <person name="Goldman G.H."/>
            <person name="Gomi K."/>
            <person name="Griffith-Jones S."/>
            <person name="Gwilliam R."/>
            <person name="Haas B.J."/>
            <person name="Haas H."/>
            <person name="Harris D.E."/>
            <person name="Horiuchi H."/>
            <person name="Huang J."/>
            <person name="Humphray S."/>
            <person name="Jimenez J."/>
            <person name="Keller N."/>
            <person name="Khouri H."/>
            <person name="Kitamoto K."/>
            <person name="Kobayashi T."/>
            <person name="Konzack S."/>
            <person name="Kulkarni R."/>
            <person name="Kumagai T."/>
            <person name="Lafton A."/>
            <person name="Latge J.-P."/>
            <person name="Li W."/>
            <person name="Lord A."/>
            <person name="Lu C."/>
            <person name="Majoros W.H."/>
            <person name="May G.S."/>
            <person name="Miller B.L."/>
            <person name="Mohamoud Y."/>
            <person name="Molina M."/>
            <person name="Monod M."/>
            <person name="Mouyna I."/>
            <person name="Mulligan S."/>
            <person name="Murphy L.D."/>
            <person name="O'Neil S."/>
            <person name="Paulsen I."/>
            <person name="Penalva M.A."/>
            <person name="Pertea M."/>
            <person name="Price C."/>
            <person name="Pritchard B.L."/>
            <person name="Quail M.A."/>
            <person name="Rabbinowitsch E."/>
            <person name="Rawlins N."/>
            <person name="Rajandream M.A."/>
            <person name="Reichard U."/>
            <person name="Renauld H."/>
            <person name="Robson G.D."/>
            <person name="Rodriguez de Cordoba S."/>
            <person name="Rodriguez-Pena J.M."/>
            <person name="Ronning C.M."/>
            <person name="Rutter S."/>
            <person name="Salzberg S.L."/>
            <person name="Sanchez M."/>
            <person name="Sanchez-Ferrero J.C."/>
            <person name="Saunders D."/>
            <person name="Seeger K."/>
            <person name="Squares R."/>
            <person name="Squares S."/>
            <person name="Takeuchi M."/>
            <person name="Tekaia F."/>
            <person name="Turner G."/>
            <person name="Vazquez de Aldana C.R."/>
            <person name="Weidman J."/>
            <person name="White O."/>
            <person name="Woodward J.R."/>
            <person name="Yu J.-H."/>
            <person name="Fraser C.M."/>
            <person name="Galagan J.E."/>
            <person name="Asai K."/>
            <person name="Machida M."/>
            <person name="Hall N."/>
            <person name="Barrell B.G."/>
            <person name="Denning D.W."/>
        </authorList>
    </citation>
    <scope>NUCLEOTIDE SEQUENCE [LARGE SCALE GENOMIC DNA]</scope>
    <source>
        <strain>ATCC MYA-4609 / CBS 101355 / FGSC A1100 / Af293</strain>
    </source>
</reference>
<evidence type="ECO:0000250" key="1"/>
<evidence type="ECO:0000305" key="2"/>
<evidence type="ECO:0007829" key="3">
    <source>
        <dbReference type="PDB" id="6XPS"/>
    </source>
</evidence>
<gene>
    <name type="primary">ndk1</name>
    <name type="ORF">AFUA_5G03490</name>
</gene>
<organism>
    <name type="scientific">Aspergillus fumigatus (strain ATCC MYA-4609 / CBS 101355 / FGSC A1100 / Af293)</name>
    <name type="common">Neosartorya fumigata</name>
    <dbReference type="NCBI Taxonomy" id="330879"/>
    <lineage>
        <taxon>Eukaryota</taxon>
        <taxon>Fungi</taxon>
        <taxon>Dikarya</taxon>
        <taxon>Ascomycota</taxon>
        <taxon>Pezizomycotina</taxon>
        <taxon>Eurotiomycetes</taxon>
        <taxon>Eurotiomycetidae</taxon>
        <taxon>Eurotiales</taxon>
        <taxon>Aspergillaceae</taxon>
        <taxon>Aspergillus</taxon>
        <taxon>Aspergillus subgen. Fumigati</taxon>
    </lineage>
</organism>
<proteinExistence type="evidence at protein level"/>